<protein>
    <recommendedName>
        <fullName>Superoxide dismutase [Cu-Zn]</fullName>
        <ecNumber>1.15.1.1</ecNumber>
    </recommendedName>
</protein>
<name>SODC_PINSY</name>
<dbReference type="EC" id="1.15.1.1"/>
<dbReference type="EMBL" id="X58578">
    <property type="protein sequence ID" value="CAA41454.1"/>
    <property type="molecule type" value="mRNA"/>
</dbReference>
<dbReference type="PIR" id="S20511">
    <property type="entry name" value="S20511"/>
</dbReference>
<dbReference type="SMR" id="P24669"/>
<dbReference type="GO" id="GO:0005737">
    <property type="term" value="C:cytoplasm"/>
    <property type="evidence" value="ECO:0007669"/>
    <property type="project" value="UniProtKB-SubCell"/>
</dbReference>
<dbReference type="GO" id="GO:0005507">
    <property type="term" value="F:copper ion binding"/>
    <property type="evidence" value="ECO:0007669"/>
    <property type="project" value="InterPro"/>
</dbReference>
<dbReference type="GO" id="GO:0004784">
    <property type="term" value="F:superoxide dismutase activity"/>
    <property type="evidence" value="ECO:0007669"/>
    <property type="project" value="UniProtKB-EC"/>
</dbReference>
<dbReference type="CDD" id="cd00305">
    <property type="entry name" value="Cu-Zn_Superoxide_Dismutase"/>
    <property type="match status" value="1"/>
</dbReference>
<dbReference type="FunFam" id="2.60.40.200:FF:000001">
    <property type="entry name" value="Superoxide dismutase [Cu-Zn]"/>
    <property type="match status" value="1"/>
</dbReference>
<dbReference type="Gene3D" id="2.60.40.200">
    <property type="entry name" value="Superoxide dismutase, copper/zinc binding domain"/>
    <property type="match status" value="1"/>
</dbReference>
<dbReference type="InterPro" id="IPR036423">
    <property type="entry name" value="SOD-like_Cu/Zn_dom_sf"/>
</dbReference>
<dbReference type="InterPro" id="IPR024134">
    <property type="entry name" value="SOD_Cu/Zn_/chaperone"/>
</dbReference>
<dbReference type="InterPro" id="IPR018152">
    <property type="entry name" value="SOD_Cu/Zn_BS"/>
</dbReference>
<dbReference type="InterPro" id="IPR001424">
    <property type="entry name" value="SOD_Cu_Zn_dom"/>
</dbReference>
<dbReference type="PANTHER" id="PTHR10003">
    <property type="entry name" value="SUPEROXIDE DISMUTASE CU-ZN -RELATED"/>
    <property type="match status" value="1"/>
</dbReference>
<dbReference type="Pfam" id="PF00080">
    <property type="entry name" value="Sod_Cu"/>
    <property type="match status" value="1"/>
</dbReference>
<dbReference type="PRINTS" id="PR00068">
    <property type="entry name" value="CUZNDISMTASE"/>
</dbReference>
<dbReference type="SUPFAM" id="SSF49329">
    <property type="entry name" value="Cu,Zn superoxide dismutase-like"/>
    <property type="match status" value="1"/>
</dbReference>
<dbReference type="PROSITE" id="PS00087">
    <property type="entry name" value="SOD_CU_ZN_1"/>
    <property type="match status" value="1"/>
</dbReference>
<dbReference type="PROSITE" id="PS00332">
    <property type="entry name" value="SOD_CU_ZN_2"/>
    <property type="match status" value="1"/>
</dbReference>
<gene>
    <name type="primary">SODCC</name>
</gene>
<comment type="function">
    <text>Destroys radicals which are normally produced within the cells and which are toxic to biological systems.</text>
</comment>
<comment type="catalytic activity">
    <reaction>
        <text>2 superoxide + 2 H(+) = H2O2 + O2</text>
        <dbReference type="Rhea" id="RHEA:20696"/>
        <dbReference type="ChEBI" id="CHEBI:15378"/>
        <dbReference type="ChEBI" id="CHEBI:15379"/>
        <dbReference type="ChEBI" id="CHEBI:16240"/>
        <dbReference type="ChEBI" id="CHEBI:18421"/>
        <dbReference type="EC" id="1.15.1.1"/>
    </reaction>
</comment>
<comment type="cofactor">
    <cofactor evidence="1">
        <name>Cu cation</name>
        <dbReference type="ChEBI" id="CHEBI:23378"/>
    </cofactor>
    <text evidence="1">Binds 1 copper ion per subunit.</text>
</comment>
<comment type="cofactor">
    <cofactor evidence="1">
        <name>Zn(2+)</name>
        <dbReference type="ChEBI" id="CHEBI:29105"/>
    </cofactor>
    <text evidence="1">Binds 1 zinc ion per subunit.</text>
</comment>
<comment type="subunit">
    <text>Homodimer.</text>
</comment>
<comment type="subcellular location">
    <subcellularLocation>
        <location>Cytoplasm</location>
    </subcellularLocation>
</comment>
<comment type="similarity">
    <text evidence="2">Belongs to the Cu-Zn superoxide dismutase family.</text>
</comment>
<keyword id="KW-0049">Antioxidant</keyword>
<keyword id="KW-0186">Copper</keyword>
<keyword id="KW-0963">Cytoplasm</keyword>
<keyword id="KW-1015">Disulfide bond</keyword>
<keyword id="KW-0479">Metal-binding</keyword>
<keyword id="KW-0560">Oxidoreductase</keyword>
<keyword id="KW-0862">Zinc</keyword>
<sequence length="154" mass="15376">MGLLKAVVVLNGAADVKGVVQFTQEGDGPTTVTGKISGLSPGLHGFHVHALGDTTNGCMSTGPHFNPLGKEHGAPTDDNRHAGDLGNVTVGTDGTVEFSITDSQIPLSGPHSIVGRAVVVHADPDDLGKGGHELSKSTGNAGGRLACGVVGLQG</sequence>
<organism>
    <name type="scientific">Pinus sylvestris</name>
    <name type="common">Scotch pine</name>
    <dbReference type="NCBI Taxonomy" id="3349"/>
    <lineage>
        <taxon>Eukaryota</taxon>
        <taxon>Viridiplantae</taxon>
        <taxon>Streptophyta</taxon>
        <taxon>Embryophyta</taxon>
        <taxon>Tracheophyta</taxon>
        <taxon>Spermatophyta</taxon>
        <taxon>Pinopsida</taxon>
        <taxon>Pinidae</taxon>
        <taxon>Conifers I</taxon>
        <taxon>Pinales</taxon>
        <taxon>Pinaceae</taxon>
        <taxon>Pinus</taxon>
        <taxon>Pinus subgen. Pinus</taxon>
    </lineage>
</organism>
<evidence type="ECO:0000250" key="1"/>
<evidence type="ECO:0000305" key="2"/>
<feature type="chain" id="PRO_0000164154" description="Superoxide dismutase [Cu-Zn]">
    <location>
        <begin position="1"/>
        <end position="154"/>
    </location>
</feature>
<feature type="binding site" evidence="1">
    <location>
        <position position="47"/>
    </location>
    <ligand>
        <name>Cu cation</name>
        <dbReference type="ChEBI" id="CHEBI:23378"/>
        <note>catalytic</note>
    </ligand>
</feature>
<feature type="binding site" evidence="1">
    <location>
        <position position="49"/>
    </location>
    <ligand>
        <name>Cu cation</name>
        <dbReference type="ChEBI" id="CHEBI:23378"/>
        <note>catalytic</note>
    </ligand>
</feature>
<feature type="binding site" evidence="1">
    <location>
        <position position="64"/>
    </location>
    <ligand>
        <name>Cu cation</name>
        <dbReference type="ChEBI" id="CHEBI:23378"/>
        <note>catalytic</note>
    </ligand>
</feature>
<feature type="binding site" evidence="1">
    <location>
        <position position="64"/>
    </location>
    <ligand>
        <name>Zn(2+)</name>
        <dbReference type="ChEBI" id="CHEBI:29105"/>
        <note>structural</note>
    </ligand>
</feature>
<feature type="binding site" evidence="1">
    <location>
        <position position="72"/>
    </location>
    <ligand>
        <name>Zn(2+)</name>
        <dbReference type="ChEBI" id="CHEBI:29105"/>
        <note>structural</note>
    </ligand>
</feature>
<feature type="binding site" evidence="1">
    <location>
        <position position="81"/>
    </location>
    <ligand>
        <name>Zn(2+)</name>
        <dbReference type="ChEBI" id="CHEBI:29105"/>
        <note>structural</note>
    </ligand>
</feature>
<feature type="binding site" evidence="1">
    <location>
        <position position="84"/>
    </location>
    <ligand>
        <name>Zn(2+)</name>
        <dbReference type="ChEBI" id="CHEBI:29105"/>
        <note>structural</note>
    </ligand>
</feature>
<feature type="binding site" evidence="1">
    <location>
        <position position="121"/>
    </location>
    <ligand>
        <name>Cu cation</name>
        <dbReference type="ChEBI" id="CHEBI:23378"/>
        <note>catalytic</note>
    </ligand>
</feature>
<feature type="disulfide bond" evidence="1">
    <location>
        <begin position="58"/>
        <end position="147"/>
    </location>
</feature>
<accession>P24669</accession>
<reference key="1">
    <citation type="journal article" date="1992" name="Plant Mol. Biol.">
        <title>Characterization of cDNAs encoding CuZn-superoxide dismutases in Scots pine.</title>
        <authorList>
            <person name="Karpinski S."/>
            <person name="Wingsle G."/>
            <person name="Olsson O."/>
            <person name="Haellgren J.E."/>
        </authorList>
    </citation>
    <scope>NUCLEOTIDE SEQUENCE [MRNA]</scope>
    <source>
        <tissue>Seedling</tissue>
    </source>
</reference>
<proteinExistence type="evidence at transcript level"/>